<proteinExistence type="evidence at transcript level"/>
<organism evidence="10">
    <name type="scientific">Mus musculus</name>
    <name type="common">Mouse</name>
    <dbReference type="NCBI Taxonomy" id="10090"/>
    <lineage>
        <taxon>Eukaryota</taxon>
        <taxon>Metazoa</taxon>
        <taxon>Chordata</taxon>
        <taxon>Craniata</taxon>
        <taxon>Vertebrata</taxon>
        <taxon>Euteleostomi</taxon>
        <taxon>Mammalia</taxon>
        <taxon>Eutheria</taxon>
        <taxon>Euarchontoglires</taxon>
        <taxon>Glires</taxon>
        <taxon>Rodentia</taxon>
        <taxon>Myomorpha</taxon>
        <taxon>Muroidea</taxon>
        <taxon>Muridae</taxon>
        <taxon>Murinae</taxon>
        <taxon>Mus</taxon>
        <taxon>Mus</taxon>
    </lineage>
</organism>
<reference evidence="8" key="1">
    <citation type="journal article" date="2003" name="J. Biol. Chem.">
        <title>A hyaluronan binding link protein gene family whose members are physically linked adjacent to chondroitin sulfate proteoglycan core protein genes: the missing links.</title>
        <authorList>
            <person name="Spicer A.P."/>
            <person name="Joo A."/>
            <person name="Bowling R.A. Jr."/>
        </authorList>
    </citation>
    <scope>NUCLEOTIDE SEQUENCE [MRNA]</scope>
    <source>
        <strain evidence="10">C57BL/6J</strain>
    </source>
</reference>
<reference evidence="8" key="2">
    <citation type="journal article" date="2003" name="Mol. Cell. Neurosci.">
        <title>Molecular cloning of Bral2, a novel brain-specific link protein, and immunohistochemical colocalization with brevican in perineuronal nets.</title>
        <authorList>
            <person name="Bekku Y."/>
            <person name="Su W.-D."/>
            <person name="Hirakawa S."/>
            <person name="Faessler R."/>
            <person name="Ohtsuka A."/>
            <person name="Kang J.S."/>
            <person name="Sanders J."/>
            <person name="Murakami T."/>
            <person name="Ninomiya Y."/>
            <person name="Oohashi T."/>
        </authorList>
    </citation>
    <scope>NUCLEOTIDE SEQUENCE [MRNA]</scope>
    <scope>TISSUE SPECIFICITY</scope>
    <scope>DEVELOPMENTAL STAGE</scope>
</reference>
<reference evidence="9" key="3">
    <citation type="submission" date="2003-04" db="EMBL/GenBank/DDBJ databases">
        <title>Discoordinate expression of link proteins and skeletal tissue proteoglycans (aggrecan and versican) in different organs from early embryonic to adult age of mice.</title>
        <authorList>
            <person name="Czipri M."/>
            <person name="Nesterovitch A.B."/>
            <person name="Glant T.T."/>
        </authorList>
    </citation>
    <scope>NUCLEOTIDE SEQUENCE [MRNA]</scope>
    <source>
        <strain evidence="9">BALB/cJ</strain>
        <tissue evidence="9">Brain</tissue>
    </source>
</reference>
<reference key="4">
    <citation type="journal article" date="2005" name="Science">
        <title>The transcriptional landscape of the mammalian genome.</title>
        <authorList>
            <person name="Carninci P."/>
            <person name="Kasukawa T."/>
            <person name="Katayama S."/>
            <person name="Gough J."/>
            <person name="Frith M.C."/>
            <person name="Maeda N."/>
            <person name="Oyama R."/>
            <person name="Ravasi T."/>
            <person name="Lenhard B."/>
            <person name="Wells C."/>
            <person name="Kodzius R."/>
            <person name="Shimokawa K."/>
            <person name="Bajic V.B."/>
            <person name="Brenner S.E."/>
            <person name="Batalov S."/>
            <person name="Forrest A.R."/>
            <person name="Zavolan M."/>
            <person name="Davis M.J."/>
            <person name="Wilming L.G."/>
            <person name="Aidinis V."/>
            <person name="Allen J.E."/>
            <person name="Ambesi-Impiombato A."/>
            <person name="Apweiler R."/>
            <person name="Aturaliya R.N."/>
            <person name="Bailey T.L."/>
            <person name="Bansal M."/>
            <person name="Baxter L."/>
            <person name="Beisel K.W."/>
            <person name="Bersano T."/>
            <person name="Bono H."/>
            <person name="Chalk A.M."/>
            <person name="Chiu K.P."/>
            <person name="Choudhary V."/>
            <person name="Christoffels A."/>
            <person name="Clutterbuck D.R."/>
            <person name="Crowe M.L."/>
            <person name="Dalla E."/>
            <person name="Dalrymple B.P."/>
            <person name="de Bono B."/>
            <person name="Della Gatta G."/>
            <person name="di Bernardo D."/>
            <person name="Down T."/>
            <person name="Engstrom P."/>
            <person name="Fagiolini M."/>
            <person name="Faulkner G."/>
            <person name="Fletcher C.F."/>
            <person name="Fukushima T."/>
            <person name="Furuno M."/>
            <person name="Futaki S."/>
            <person name="Gariboldi M."/>
            <person name="Georgii-Hemming P."/>
            <person name="Gingeras T.R."/>
            <person name="Gojobori T."/>
            <person name="Green R.E."/>
            <person name="Gustincich S."/>
            <person name="Harbers M."/>
            <person name="Hayashi Y."/>
            <person name="Hensch T.K."/>
            <person name="Hirokawa N."/>
            <person name="Hill D."/>
            <person name="Huminiecki L."/>
            <person name="Iacono M."/>
            <person name="Ikeo K."/>
            <person name="Iwama A."/>
            <person name="Ishikawa T."/>
            <person name="Jakt M."/>
            <person name="Kanapin A."/>
            <person name="Katoh M."/>
            <person name="Kawasawa Y."/>
            <person name="Kelso J."/>
            <person name="Kitamura H."/>
            <person name="Kitano H."/>
            <person name="Kollias G."/>
            <person name="Krishnan S.P."/>
            <person name="Kruger A."/>
            <person name="Kummerfeld S.K."/>
            <person name="Kurochkin I.V."/>
            <person name="Lareau L.F."/>
            <person name="Lazarevic D."/>
            <person name="Lipovich L."/>
            <person name="Liu J."/>
            <person name="Liuni S."/>
            <person name="McWilliam S."/>
            <person name="Madan Babu M."/>
            <person name="Madera M."/>
            <person name="Marchionni L."/>
            <person name="Matsuda H."/>
            <person name="Matsuzawa S."/>
            <person name="Miki H."/>
            <person name="Mignone F."/>
            <person name="Miyake S."/>
            <person name="Morris K."/>
            <person name="Mottagui-Tabar S."/>
            <person name="Mulder N."/>
            <person name="Nakano N."/>
            <person name="Nakauchi H."/>
            <person name="Ng P."/>
            <person name="Nilsson R."/>
            <person name="Nishiguchi S."/>
            <person name="Nishikawa S."/>
            <person name="Nori F."/>
            <person name="Ohara O."/>
            <person name="Okazaki Y."/>
            <person name="Orlando V."/>
            <person name="Pang K.C."/>
            <person name="Pavan W.J."/>
            <person name="Pavesi G."/>
            <person name="Pesole G."/>
            <person name="Petrovsky N."/>
            <person name="Piazza S."/>
            <person name="Reed J."/>
            <person name="Reid J.F."/>
            <person name="Ring B.Z."/>
            <person name="Ringwald M."/>
            <person name="Rost B."/>
            <person name="Ruan Y."/>
            <person name="Salzberg S.L."/>
            <person name="Sandelin A."/>
            <person name="Schneider C."/>
            <person name="Schoenbach C."/>
            <person name="Sekiguchi K."/>
            <person name="Semple C.A."/>
            <person name="Seno S."/>
            <person name="Sessa L."/>
            <person name="Sheng Y."/>
            <person name="Shibata Y."/>
            <person name="Shimada H."/>
            <person name="Shimada K."/>
            <person name="Silva D."/>
            <person name="Sinclair B."/>
            <person name="Sperling S."/>
            <person name="Stupka E."/>
            <person name="Sugiura K."/>
            <person name="Sultana R."/>
            <person name="Takenaka Y."/>
            <person name="Taki K."/>
            <person name="Tammoja K."/>
            <person name="Tan S.L."/>
            <person name="Tang S."/>
            <person name="Taylor M.S."/>
            <person name="Tegner J."/>
            <person name="Teichmann S.A."/>
            <person name="Ueda H.R."/>
            <person name="van Nimwegen E."/>
            <person name="Verardo R."/>
            <person name="Wei C.L."/>
            <person name="Yagi K."/>
            <person name="Yamanishi H."/>
            <person name="Zabarovsky E."/>
            <person name="Zhu S."/>
            <person name="Zimmer A."/>
            <person name="Hide W."/>
            <person name="Bult C."/>
            <person name="Grimmond S.M."/>
            <person name="Teasdale R.D."/>
            <person name="Liu E.T."/>
            <person name="Brusic V."/>
            <person name="Quackenbush J."/>
            <person name="Wahlestedt C."/>
            <person name="Mattick J.S."/>
            <person name="Hume D.A."/>
            <person name="Kai C."/>
            <person name="Sasaki D."/>
            <person name="Tomaru Y."/>
            <person name="Fukuda S."/>
            <person name="Kanamori-Katayama M."/>
            <person name="Suzuki M."/>
            <person name="Aoki J."/>
            <person name="Arakawa T."/>
            <person name="Iida J."/>
            <person name="Imamura K."/>
            <person name="Itoh M."/>
            <person name="Kato T."/>
            <person name="Kawaji H."/>
            <person name="Kawagashira N."/>
            <person name="Kawashima T."/>
            <person name="Kojima M."/>
            <person name="Kondo S."/>
            <person name="Konno H."/>
            <person name="Nakano K."/>
            <person name="Ninomiya N."/>
            <person name="Nishio T."/>
            <person name="Okada M."/>
            <person name="Plessy C."/>
            <person name="Shibata K."/>
            <person name="Shiraki T."/>
            <person name="Suzuki S."/>
            <person name="Tagami M."/>
            <person name="Waki K."/>
            <person name="Watahiki A."/>
            <person name="Okamura-Oho Y."/>
            <person name="Suzuki H."/>
            <person name="Kawai J."/>
            <person name="Hayashizaki Y."/>
        </authorList>
    </citation>
    <scope>NUCLEOTIDE SEQUENCE [LARGE SCALE MRNA]</scope>
    <source>
        <strain>C57BL/6J</strain>
        <tissue>Diencephalon</tissue>
    </source>
</reference>
<reference key="5">
    <citation type="journal article" date="2004" name="Genome Res.">
        <title>The status, quality, and expansion of the NIH full-length cDNA project: the Mammalian Gene Collection (MGC).</title>
        <authorList>
            <consortium name="The MGC Project Team"/>
        </authorList>
    </citation>
    <scope>NUCLEOTIDE SEQUENCE [LARGE SCALE MRNA]</scope>
    <source>
        <tissue>Brain</tissue>
    </source>
</reference>
<reference key="6">
    <citation type="journal article" date="2012" name="J. Comp. Neurol.">
        <title>Bral2 is indispensable for the proper localization of brevican and the structural integrity of the perineuronal net in the brainstem and cerebellum.</title>
        <authorList>
            <person name="Bekku Y."/>
            <person name="Saito M."/>
            <person name="Moser M."/>
            <person name="Fuchigami M."/>
            <person name="Maehara A."/>
            <person name="Nakayama M."/>
            <person name="Kusachi S."/>
            <person name="Ninomiya Y."/>
            <person name="Oohashi T."/>
        </authorList>
    </citation>
    <scope>FUNCTION</scope>
    <scope>DISRUPTION PHENOTYPE</scope>
    <scope>TISSUE SPECIFICITY</scope>
</reference>
<reference key="7">
    <citation type="journal article" date="2018" name="J. Neurochem.">
        <title>Hapln4/Bral2 is a selective regulator for formation and transmission of GABAergic synapses between Purkinje and deep cerebellar nuclei neurons.</title>
        <authorList>
            <person name="Edamatsu M."/>
            <person name="Miyano R."/>
            <person name="Fujikawa A."/>
            <person name="Fujii F."/>
            <person name="Hori T."/>
            <person name="Sakaba T."/>
            <person name="Oohashi T."/>
        </authorList>
    </citation>
    <scope>FUNCTION</scope>
    <scope>DISRUPTION PHENOTYPE</scope>
</reference>
<comment type="function">
    <text evidence="6 7">Essential for the proper localization of brevican (BCAN), mainly as a perineuronal nets (PNNs)-type deposition in the brainstem and cerebellum thereby playing a key role in the formation and structural organization of PNNs (PubMed:22121037). Contributes to the formation and transmission of inhibitory GABAergic synapses between Purkinje cells and deep cerebellar nuclei neurons (PubMed:30125937).</text>
</comment>
<comment type="subcellular location">
    <subcellularLocation>
        <location evidence="2">Secreted</location>
        <location evidence="2">Extracellular space</location>
        <location evidence="2">Extracellular matrix</location>
    </subcellularLocation>
</comment>
<comment type="tissue specificity">
    <text evidence="5 6">Expressed predominantly in brain where it is found mainly throughout the midbrain and hindbrain in a perineuronal net pattern.</text>
</comment>
<comment type="developmental stage">
    <text evidence="5">Expression begins at embryonic day 20 and increases thereafter. Expression continues into adulthood.</text>
</comment>
<comment type="disruption phenotype">
    <text evidence="6 7">In deep cerebellar nuclei (DCN) neurons of knockout mice, inhibitory synaptic strengths are reduced as compared to those in wild-type mice, whereas the properties of excitatory synapses are unaffected (PubMed:30125937). A reduction in GABAergic pre-synaptic terminals of Purkinje cells are seen in the DCN neurons (PubMed:30125937). Mice show significantly attenuated perineuronal nets formation in the DCN, a marked decrease of brevican (BCAN) in the brainstem and cerebellum and a reduction in synapse number in the DCN neurons (PubMed:22121037).</text>
</comment>
<comment type="similarity">
    <text evidence="8">Belongs to the HAPLN family.</text>
</comment>
<keyword id="KW-1015">Disulfide bond</keyword>
<keyword id="KW-0272">Extracellular matrix</keyword>
<keyword id="KW-0325">Glycoprotein</keyword>
<keyword id="KW-0373">Hyaluronic acid</keyword>
<keyword id="KW-0393">Immunoglobulin domain</keyword>
<keyword id="KW-1185">Reference proteome</keyword>
<keyword id="KW-0677">Repeat</keyword>
<keyword id="KW-0964">Secreted</keyword>
<keyword id="KW-0732">Signal</keyword>
<evidence type="ECO:0000250" key="1">
    <source>
        <dbReference type="UniProtKB" id="P03994"/>
    </source>
</evidence>
<evidence type="ECO:0000250" key="2">
    <source>
        <dbReference type="UniProtKB" id="Q9ESM3"/>
    </source>
</evidence>
<evidence type="ECO:0000255" key="3"/>
<evidence type="ECO:0000255" key="4">
    <source>
        <dbReference type="PROSITE-ProRule" id="PRU00323"/>
    </source>
</evidence>
<evidence type="ECO:0000269" key="5">
    <source>
    </source>
</evidence>
<evidence type="ECO:0000269" key="6">
    <source>
    </source>
</evidence>
<evidence type="ECO:0000269" key="7">
    <source>
    </source>
</evidence>
<evidence type="ECO:0000305" key="8"/>
<evidence type="ECO:0000312" key="9">
    <source>
        <dbReference type="EMBL" id="AAP12625.1"/>
    </source>
</evidence>
<evidence type="ECO:0000312" key="10">
    <source>
        <dbReference type="EMBL" id="AAP22050.1"/>
    </source>
</evidence>
<accession>Q80WM4</accession>
<accession>Q05AB1</accession>
<accession>Q80XX2</accession>
<feature type="signal peptide" evidence="3">
    <location>
        <begin position="1"/>
        <end position="30"/>
    </location>
</feature>
<feature type="chain" id="PRO_0000013193" description="Hyaluronan and proteoglycan link protein 4" evidence="3">
    <location>
        <begin position="31"/>
        <end position="400"/>
    </location>
</feature>
<feature type="domain" description="Ig-like C2-type">
    <location>
        <begin position="47"/>
        <end position="155"/>
    </location>
</feature>
<feature type="domain" description="Link 1" evidence="4 8">
    <location>
        <begin position="164"/>
        <end position="266"/>
    </location>
</feature>
<feature type="domain" description="Link 2" evidence="4 8">
    <location>
        <begin position="271"/>
        <end position="363"/>
    </location>
</feature>
<feature type="glycosylation site" description="N-linked (GlcNAc...) asparagine" evidence="8">
    <location>
        <position position="133"/>
    </location>
</feature>
<feature type="disulfide bond" evidence="1">
    <location>
        <begin position="69"/>
        <end position="144"/>
    </location>
</feature>
<feature type="disulfide bond" evidence="1">
    <location>
        <begin position="186"/>
        <end position="264"/>
    </location>
</feature>
<feature type="disulfide bond" evidence="1">
    <location>
        <begin position="210"/>
        <end position="231"/>
    </location>
</feature>
<feature type="disulfide bond" evidence="1">
    <location>
        <begin position="291"/>
        <end position="361"/>
    </location>
</feature>
<feature type="disulfide bond" evidence="1">
    <location>
        <begin position="316"/>
        <end position="337"/>
    </location>
</feature>
<feature type="sequence conflict" description="In Ref. 1; AAP22050." evidence="8" ref="1">
    <original>A</original>
    <variation>D</variation>
    <location>
        <position position="76"/>
    </location>
</feature>
<sequence length="400" mass="42809">MACAPGALGHRALWAVAWGLLLLVPVLAGAQRGRKKVVHVLEGESGSVVVQTAPGQVVSHRGGTIVLPCRYHYEAAAHGHDGVRLKWTKVVDPLAFADVFVALGPQHRAFGPYRGRAELQNDGPGDASLVLRNVTLQDYGRYECEVTNELEDDVGMVKLDLEGVVFPYHPRGGRYKMTFVEAQRACAEQDGILASAEQLHAAWRDGLDWCNAGWLRDGSVQYPVSHAREPCGGTGSTGAGGGTNGGVRNYGYRHNAEERYDAFCFTSNLPGRVFFLKPLRPVALAGAVRACAARGATVAKVGQLFAAWKLQLLDRCTAGWLADGSARYPIVNPRTRCGGPRPGVRSLGFPDASRRLFGVYCYRAPGAPDPAPGGWGWGWAGGGGWAGGSRDPAAWTPLRV</sequence>
<name>HPLN4_MOUSE</name>
<protein>
    <recommendedName>
        <fullName>Hyaluronan and proteoglycan link protein 4</fullName>
    </recommendedName>
    <alternativeName>
        <fullName>Brain link protein 2</fullName>
    </alternativeName>
</protein>
<gene>
    <name type="primary">Hapln4</name>
    <name type="synonym">Bral2</name>
    <name type="synonym">Lpr4</name>
</gene>
<dbReference type="EMBL" id="AY262758">
    <property type="protein sequence ID" value="AAP22050.1"/>
    <property type="molecule type" value="mRNA"/>
</dbReference>
<dbReference type="EMBL" id="AB107882">
    <property type="protein sequence ID" value="BAC79076.1"/>
    <property type="molecule type" value="mRNA"/>
</dbReference>
<dbReference type="EMBL" id="AY269789">
    <property type="protein sequence ID" value="AAP12625.1"/>
    <property type="molecule type" value="mRNA"/>
</dbReference>
<dbReference type="EMBL" id="AK034300">
    <property type="protein sequence ID" value="BAC28664.1"/>
    <property type="molecule type" value="mRNA"/>
</dbReference>
<dbReference type="EMBL" id="BC125339">
    <property type="protein sequence ID" value="AAI25340.1"/>
    <property type="molecule type" value="mRNA"/>
</dbReference>
<dbReference type="EMBL" id="BC125341">
    <property type="protein sequence ID" value="AAI25342.1"/>
    <property type="molecule type" value="mRNA"/>
</dbReference>
<dbReference type="CCDS" id="CCDS40365.1"/>
<dbReference type="RefSeq" id="NP_808568.1">
    <property type="nucleotide sequence ID" value="NM_177900.4"/>
</dbReference>
<dbReference type="SMR" id="Q80WM4"/>
<dbReference type="BioGRID" id="237025">
    <property type="interactions" value="1"/>
</dbReference>
<dbReference type="FunCoup" id="Q80WM4">
    <property type="interactions" value="50"/>
</dbReference>
<dbReference type="IntAct" id="Q80WM4">
    <property type="interactions" value="1"/>
</dbReference>
<dbReference type="MINT" id="Q80WM4"/>
<dbReference type="STRING" id="10090.ENSMUSP00000007738"/>
<dbReference type="GlyConnect" id="2374">
    <property type="glycosylation" value="2 N-Linked glycans (1 site)"/>
</dbReference>
<dbReference type="GlyCosmos" id="Q80WM4">
    <property type="glycosylation" value="1 site, 2 glycans"/>
</dbReference>
<dbReference type="GlyGen" id="Q80WM4">
    <property type="glycosylation" value="2 sites, 3 N-linked glycans (1 site), 1 O-linked glycan (1 site)"/>
</dbReference>
<dbReference type="iPTMnet" id="Q80WM4"/>
<dbReference type="PhosphoSitePlus" id="Q80WM4"/>
<dbReference type="SwissPalm" id="Q80WM4"/>
<dbReference type="jPOST" id="Q80WM4"/>
<dbReference type="PaxDb" id="10090-ENSMUSP00000007738"/>
<dbReference type="PeptideAtlas" id="Q80WM4"/>
<dbReference type="ProteomicsDB" id="273272"/>
<dbReference type="Antibodypedia" id="28414">
    <property type="antibodies" value="190 antibodies from 28 providers"/>
</dbReference>
<dbReference type="DNASU" id="330790"/>
<dbReference type="Ensembl" id="ENSMUST00000007738.11">
    <property type="protein sequence ID" value="ENSMUSP00000007738.10"/>
    <property type="gene ID" value="ENSMUSG00000007594.11"/>
</dbReference>
<dbReference type="GeneID" id="330790"/>
<dbReference type="KEGG" id="mmu:330790"/>
<dbReference type="UCSC" id="uc009lyr.1">
    <property type="organism name" value="mouse"/>
</dbReference>
<dbReference type="AGR" id="MGI:2679531"/>
<dbReference type="CTD" id="404037"/>
<dbReference type="MGI" id="MGI:2679531">
    <property type="gene designation" value="Hapln4"/>
</dbReference>
<dbReference type="VEuPathDB" id="HostDB:ENSMUSG00000007594"/>
<dbReference type="eggNOG" id="ENOG502QRG1">
    <property type="taxonomic scope" value="Eukaryota"/>
</dbReference>
<dbReference type="GeneTree" id="ENSGT00940000160926"/>
<dbReference type="HOGENOM" id="CLU_052285_1_0_1"/>
<dbReference type="InParanoid" id="Q80WM4"/>
<dbReference type="OMA" id="QACLQQD"/>
<dbReference type="OrthoDB" id="5359219at2759"/>
<dbReference type="PhylomeDB" id="Q80WM4"/>
<dbReference type="TreeFam" id="TF332134"/>
<dbReference type="BioGRID-ORCS" id="330790">
    <property type="hits" value="0 hits in 78 CRISPR screens"/>
</dbReference>
<dbReference type="CD-CODE" id="CE726F99">
    <property type="entry name" value="Postsynaptic density"/>
</dbReference>
<dbReference type="PRO" id="PR:Q80WM4"/>
<dbReference type="Proteomes" id="UP000000589">
    <property type="component" value="Chromosome 8"/>
</dbReference>
<dbReference type="RNAct" id="Q80WM4">
    <property type="molecule type" value="protein"/>
</dbReference>
<dbReference type="Bgee" id="ENSMUSG00000007594">
    <property type="expression patterns" value="Expressed in primary visual cortex and 108 other cell types or tissues"/>
</dbReference>
<dbReference type="GO" id="GO:0005576">
    <property type="term" value="C:extracellular region"/>
    <property type="evidence" value="ECO:0007669"/>
    <property type="project" value="UniProtKB-KW"/>
</dbReference>
<dbReference type="GO" id="GO:0072534">
    <property type="term" value="C:perineuronal net"/>
    <property type="evidence" value="ECO:0000314"/>
    <property type="project" value="UniProtKB"/>
</dbReference>
<dbReference type="GO" id="GO:0045202">
    <property type="term" value="C:synapse"/>
    <property type="evidence" value="ECO:0007669"/>
    <property type="project" value="GOC"/>
</dbReference>
<dbReference type="GO" id="GO:0005540">
    <property type="term" value="F:hyaluronic acid binding"/>
    <property type="evidence" value="ECO:0007669"/>
    <property type="project" value="UniProtKB-KW"/>
</dbReference>
<dbReference type="GO" id="GO:0150043">
    <property type="term" value="F:structural constituent of synapse-associated extracellular matrix"/>
    <property type="evidence" value="ECO:0000315"/>
    <property type="project" value="UniProtKB"/>
</dbReference>
<dbReference type="GO" id="GO:0007155">
    <property type="term" value="P:cell adhesion"/>
    <property type="evidence" value="ECO:0007669"/>
    <property type="project" value="InterPro"/>
</dbReference>
<dbReference type="GO" id="GO:1904862">
    <property type="term" value="P:inhibitory synapse assembly"/>
    <property type="evidence" value="ECO:0000315"/>
    <property type="project" value="UniProtKB"/>
</dbReference>
<dbReference type="GO" id="GO:0051932">
    <property type="term" value="P:synaptic transmission, GABAergic"/>
    <property type="evidence" value="ECO:0000315"/>
    <property type="project" value="UniProtKB"/>
</dbReference>
<dbReference type="CDD" id="cd03519">
    <property type="entry name" value="Link_domain_HAPLN_module_2"/>
    <property type="match status" value="1"/>
</dbReference>
<dbReference type="FunFam" id="2.60.40.10:FF:000536">
    <property type="entry name" value="Hyaluronan and proteoglycan link protein 4"/>
    <property type="match status" value="1"/>
</dbReference>
<dbReference type="FunFam" id="3.10.100.10:FF:000001">
    <property type="entry name" value="Hyaluronan proteoglycan link protein 1"/>
    <property type="match status" value="1"/>
</dbReference>
<dbReference type="FunFam" id="3.10.100.10:FF:000002">
    <property type="entry name" value="Hyaluronan proteoglycan link protein 1"/>
    <property type="match status" value="1"/>
</dbReference>
<dbReference type="Gene3D" id="2.60.40.10">
    <property type="entry name" value="Immunoglobulins"/>
    <property type="match status" value="1"/>
</dbReference>
<dbReference type="Gene3D" id="3.10.100.10">
    <property type="entry name" value="Mannose-Binding Protein A, subunit A"/>
    <property type="match status" value="2"/>
</dbReference>
<dbReference type="InterPro" id="IPR016186">
    <property type="entry name" value="C-type_lectin-like/link_sf"/>
</dbReference>
<dbReference type="InterPro" id="IPR016187">
    <property type="entry name" value="CTDL_fold"/>
</dbReference>
<dbReference type="InterPro" id="IPR050691">
    <property type="entry name" value="Hyaluronan_bind_Proteoglycan"/>
</dbReference>
<dbReference type="InterPro" id="IPR007110">
    <property type="entry name" value="Ig-like_dom"/>
</dbReference>
<dbReference type="InterPro" id="IPR036179">
    <property type="entry name" value="Ig-like_dom_sf"/>
</dbReference>
<dbReference type="InterPro" id="IPR013783">
    <property type="entry name" value="Ig-like_fold"/>
</dbReference>
<dbReference type="InterPro" id="IPR003599">
    <property type="entry name" value="Ig_sub"/>
</dbReference>
<dbReference type="InterPro" id="IPR003598">
    <property type="entry name" value="Ig_sub2"/>
</dbReference>
<dbReference type="InterPro" id="IPR013106">
    <property type="entry name" value="Ig_V-set"/>
</dbReference>
<dbReference type="InterPro" id="IPR000538">
    <property type="entry name" value="Link_dom"/>
</dbReference>
<dbReference type="PANTHER" id="PTHR22804">
    <property type="entry name" value="AGGRECAN/VERSICAN PROTEOGLYCAN"/>
    <property type="match status" value="1"/>
</dbReference>
<dbReference type="PANTHER" id="PTHR22804:SF11">
    <property type="entry name" value="HYALURONAN AND PROTEOGLYCAN LINK PROTEIN 4"/>
    <property type="match status" value="1"/>
</dbReference>
<dbReference type="Pfam" id="PF07686">
    <property type="entry name" value="V-set"/>
    <property type="match status" value="1"/>
</dbReference>
<dbReference type="Pfam" id="PF00193">
    <property type="entry name" value="Xlink"/>
    <property type="match status" value="2"/>
</dbReference>
<dbReference type="PRINTS" id="PR01265">
    <property type="entry name" value="LINKMODULE"/>
</dbReference>
<dbReference type="SMART" id="SM00409">
    <property type="entry name" value="IG"/>
    <property type="match status" value="1"/>
</dbReference>
<dbReference type="SMART" id="SM00408">
    <property type="entry name" value="IGc2"/>
    <property type="match status" value="1"/>
</dbReference>
<dbReference type="SMART" id="SM00406">
    <property type="entry name" value="IGv"/>
    <property type="match status" value="1"/>
</dbReference>
<dbReference type="SMART" id="SM00445">
    <property type="entry name" value="LINK"/>
    <property type="match status" value="2"/>
</dbReference>
<dbReference type="SUPFAM" id="SSF56436">
    <property type="entry name" value="C-type lectin-like"/>
    <property type="match status" value="2"/>
</dbReference>
<dbReference type="SUPFAM" id="SSF48726">
    <property type="entry name" value="Immunoglobulin"/>
    <property type="match status" value="1"/>
</dbReference>
<dbReference type="PROSITE" id="PS50835">
    <property type="entry name" value="IG_LIKE"/>
    <property type="match status" value="1"/>
</dbReference>
<dbReference type="PROSITE" id="PS01241">
    <property type="entry name" value="LINK_1"/>
    <property type="match status" value="1"/>
</dbReference>
<dbReference type="PROSITE" id="PS50963">
    <property type="entry name" value="LINK_2"/>
    <property type="match status" value="2"/>
</dbReference>